<name>KAD_SHELP</name>
<evidence type="ECO:0000255" key="1">
    <source>
        <dbReference type="HAMAP-Rule" id="MF_00235"/>
    </source>
</evidence>
<gene>
    <name evidence="1" type="primary">adk</name>
    <name type="ordered locus">Shew_2230</name>
</gene>
<feature type="chain" id="PRO_1000058898" description="Adenylate kinase">
    <location>
        <begin position="1"/>
        <end position="214"/>
    </location>
</feature>
<feature type="region of interest" description="NMP" evidence="1">
    <location>
        <begin position="30"/>
        <end position="59"/>
    </location>
</feature>
<feature type="region of interest" description="LID" evidence="1">
    <location>
        <begin position="122"/>
        <end position="159"/>
    </location>
</feature>
<feature type="binding site" evidence="1">
    <location>
        <begin position="10"/>
        <end position="15"/>
    </location>
    <ligand>
        <name>ATP</name>
        <dbReference type="ChEBI" id="CHEBI:30616"/>
    </ligand>
</feature>
<feature type="binding site" evidence="1">
    <location>
        <position position="31"/>
    </location>
    <ligand>
        <name>AMP</name>
        <dbReference type="ChEBI" id="CHEBI:456215"/>
    </ligand>
</feature>
<feature type="binding site" evidence="1">
    <location>
        <position position="36"/>
    </location>
    <ligand>
        <name>AMP</name>
        <dbReference type="ChEBI" id="CHEBI:456215"/>
    </ligand>
</feature>
<feature type="binding site" evidence="1">
    <location>
        <begin position="57"/>
        <end position="59"/>
    </location>
    <ligand>
        <name>AMP</name>
        <dbReference type="ChEBI" id="CHEBI:456215"/>
    </ligand>
</feature>
<feature type="binding site" evidence="1">
    <location>
        <begin position="85"/>
        <end position="88"/>
    </location>
    <ligand>
        <name>AMP</name>
        <dbReference type="ChEBI" id="CHEBI:456215"/>
    </ligand>
</feature>
<feature type="binding site" evidence="1">
    <location>
        <position position="92"/>
    </location>
    <ligand>
        <name>AMP</name>
        <dbReference type="ChEBI" id="CHEBI:456215"/>
    </ligand>
</feature>
<feature type="binding site" evidence="1">
    <location>
        <position position="123"/>
    </location>
    <ligand>
        <name>ATP</name>
        <dbReference type="ChEBI" id="CHEBI:30616"/>
    </ligand>
</feature>
<feature type="binding site" evidence="1">
    <location>
        <begin position="132"/>
        <end position="133"/>
    </location>
    <ligand>
        <name>ATP</name>
        <dbReference type="ChEBI" id="CHEBI:30616"/>
    </ligand>
</feature>
<feature type="binding site" evidence="1">
    <location>
        <position position="156"/>
    </location>
    <ligand>
        <name>AMP</name>
        <dbReference type="ChEBI" id="CHEBI:456215"/>
    </ligand>
</feature>
<feature type="binding site" evidence="1">
    <location>
        <position position="167"/>
    </location>
    <ligand>
        <name>AMP</name>
        <dbReference type="ChEBI" id="CHEBI:456215"/>
    </ligand>
</feature>
<feature type="binding site" evidence="1">
    <location>
        <position position="200"/>
    </location>
    <ligand>
        <name>ATP</name>
        <dbReference type="ChEBI" id="CHEBI:30616"/>
    </ligand>
</feature>
<organism>
    <name type="scientific">Shewanella loihica (strain ATCC BAA-1088 / PV-4)</name>
    <dbReference type="NCBI Taxonomy" id="323850"/>
    <lineage>
        <taxon>Bacteria</taxon>
        <taxon>Pseudomonadati</taxon>
        <taxon>Pseudomonadota</taxon>
        <taxon>Gammaproteobacteria</taxon>
        <taxon>Alteromonadales</taxon>
        <taxon>Shewanellaceae</taxon>
        <taxon>Shewanella</taxon>
    </lineage>
</organism>
<reference key="1">
    <citation type="submission" date="2007-03" db="EMBL/GenBank/DDBJ databases">
        <title>Complete sequence of Shewanella loihica PV-4.</title>
        <authorList>
            <consortium name="US DOE Joint Genome Institute"/>
            <person name="Copeland A."/>
            <person name="Lucas S."/>
            <person name="Lapidus A."/>
            <person name="Barry K."/>
            <person name="Detter J.C."/>
            <person name="Glavina del Rio T."/>
            <person name="Hammon N."/>
            <person name="Israni S."/>
            <person name="Dalin E."/>
            <person name="Tice H."/>
            <person name="Pitluck S."/>
            <person name="Chain P."/>
            <person name="Malfatti S."/>
            <person name="Shin M."/>
            <person name="Vergez L."/>
            <person name="Schmutz J."/>
            <person name="Larimer F."/>
            <person name="Land M."/>
            <person name="Hauser L."/>
            <person name="Kyrpides N."/>
            <person name="Mikhailova N."/>
            <person name="Romine M.F."/>
            <person name="Serres G."/>
            <person name="Fredrickson J."/>
            <person name="Tiedje J."/>
            <person name="Richardson P."/>
        </authorList>
    </citation>
    <scope>NUCLEOTIDE SEQUENCE [LARGE SCALE GENOMIC DNA]</scope>
    <source>
        <strain>ATCC BAA-1088 / PV-4</strain>
    </source>
</reference>
<dbReference type="EC" id="2.7.4.3" evidence="1"/>
<dbReference type="EMBL" id="CP000606">
    <property type="protein sequence ID" value="ABO24096.1"/>
    <property type="molecule type" value="Genomic_DNA"/>
</dbReference>
<dbReference type="RefSeq" id="WP_011866028.1">
    <property type="nucleotide sequence ID" value="NC_009092.1"/>
</dbReference>
<dbReference type="SMR" id="A3QF48"/>
<dbReference type="STRING" id="323850.Shew_2230"/>
<dbReference type="KEGG" id="slo:Shew_2230"/>
<dbReference type="eggNOG" id="COG0563">
    <property type="taxonomic scope" value="Bacteria"/>
</dbReference>
<dbReference type="HOGENOM" id="CLU_032354_1_2_6"/>
<dbReference type="OrthoDB" id="9805030at2"/>
<dbReference type="UniPathway" id="UPA00588">
    <property type="reaction ID" value="UER00649"/>
</dbReference>
<dbReference type="Proteomes" id="UP000001558">
    <property type="component" value="Chromosome"/>
</dbReference>
<dbReference type="GO" id="GO:0005737">
    <property type="term" value="C:cytoplasm"/>
    <property type="evidence" value="ECO:0007669"/>
    <property type="project" value="UniProtKB-SubCell"/>
</dbReference>
<dbReference type="GO" id="GO:0004017">
    <property type="term" value="F:adenylate kinase activity"/>
    <property type="evidence" value="ECO:0007669"/>
    <property type="project" value="UniProtKB-UniRule"/>
</dbReference>
<dbReference type="GO" id="GO:0005524">
    <property type="term" value="F:ATP binding"/>
    <property type="evidence" value="ECO:0007669"/>
    <property type="project" value="UniProtKB-UniRule"/>
</dbReference>
<dbReference type="GO" id="GO:0044209">
    <property type="term" value="P:AMP salvage"/>
    <property type="evidence" value="ECO:0007669"/>
    <property type="project" value="UniProtKB-UniRule"/>
</dbReference>
<dbReference type="CDD" id="cd01428">
    <property type="entry name" value="ADK"/>
    <property type="match status" value="1"/>
</dbReference>
<dbReference type="FunFam" id="3.40.50.300:FF:000106">
    <property type="entry name" value="Adenylate kinase mitochondrial"/>
    <property type="match status" value="1"/>
</dbReference>
<dbReference type="Gene3D" id="3.40.50.300">
    <property type="entry name" value="P-loop containing nucleotide triphosphate hydrolases"/>
    <property type="match status" value="1"/>
</dbReference>
<dbReference type="HAMAP" id="MF_00235">
    <property type="entry name" value="Adenylate_kinase_Adk"/>
    <property type="match status" value="1"/>
</dbReference>
<dbReference type="InterPro" id="IPR006259">
    <property type="entry name" value="Adenyl_kin_sub"/>
</dbReference>
<dbReference type="InterPro" id="IPR000850">
    <property type="entry name" value="Adenylat/UMP-CMP_kin"/>
</dbReference>
<dbReference type="InterPro" id="IPR033690">
    <property type="entry name" value="Adenylat_kinase_CS"/>
</dbReference>
<dbReference type="InterPro" id="IPR007862">
    <property type="entry name" value="Adenylate_kinase_lid-dom"/>
</dbReference>
<dbReference type="InterPro" id="IPR027417">
    <property type="entry name" value="P-loop_NTPase"/>
</dbReference>
<dbReference type="NCBIfam" id="TIGR01351">
    <property type="entry name" value="adk"/>
    <property type="match status" value="1"/>
</dbReference>
<dbReference type="NCBIfam" id="NF001379">
    <property type="entry name" value="PRK00279.1-1"/>
    <property type="match status" value="1"/>
</dbReference>
<dbReference type="NCBIfam" id="NF001380">
    <property type="entry name" value="PRK00279.1-2"/>
    <property type="match status" value="1"/>
</dbReference>
<dbReference type="NCBIfam" id="NF001381">
    <property type="entry name" value="PRK00279.1-3"/>
    <property type="match status" value="1"/>
</dbReference>
<dbReference type="NCBIfam" id="NF011100">
    <property type="entry name" value="PRK14527.1"/>
    <property type="match status" value="1"/>
</dbReference>
<dbReference type="PANTHER" id="PTHR23359">
    <property type="entry name" value="NUCLEOTIDE KINASE"/>
    <property type="match status" value="1"/>
</dbReference>
<dbReference type="Pfam" id="PF00406">
    <property type="entry name" value="ADK"/>
    <property type="match status" value="1"/>
</dbReference>
<dbReference type="Pfam" id="PF05191">
    <property type="entry name" value="ADK_lid"/>
    <property type="match status" value="1"/>
</dbReference>
<dbReference type="PRINTS" id="PR00094">
    <property type="entry name" value="ADENYLTKNASE"/>
</dbReference>
<dbReference type="SUPFAM" id="SSF52540">
    <property type="entry name" value="P-loop containing nucleoside triphosphate hydrolases"/>
    <property type="match status" value="1"/>
</dbReference>
<dbReference type="PROSITE" id="PS00113">
    <property type="entry name" value="ADENYLATE_KINASE"/>
    <property type="match status" value="1"/>
</dbReference>
<sequence>MRIMLLGAPGAGKGTQAQFIMEKYGVPQISTGDMLRAAVKAGTPLGLEAKKVMDAGQLVSDELIIGLVKERIAQDDCAKGFLLDGFPRTIPQADAMAASGIDIDHVIEIDVPDEEIVKRMSGRRVHPGSGRVYHIVYNPPKVEGKDDVTGEDLAIRPDDEESTVRKRLGIYHEQTKPLVEYYGKVAEQGKLTYNKFDGTQSVGAVSEAIVKAIG</sequence>
<accession>A3QF48</accession>
<keyword id="KW-0067">ATP-binding</keyword>
<keyword id="KW-0963">Cytoplasm</keyword>
<keyword id="KW-0418">Kinase</keyword>
<keyword id="KW-0545">Nucleotide biosynthesis</keyword>
<keyword id="KW-0547">Nucleotide-binding</keyword>
<keyword id="KW-1185">Reference proteome</keyword>
<keyword id="KW-0808">Transferase</keyword>
<proteinExistence type="inferred from homology"/>
<comment type="function">
    <text evidence="1">Catalyzes the reversible transfer of the terminal phosphate group between ATP and AMP. Plays an important role in cellular energy homeostasis and in adenine nucleotide metabolism.</text>
</comment>
<comment type="catalytic activity">
    <reaction evidence="1">
        <text>AMP + ATP = 2 ADP</text>
        <dbReference type="Rhea" id="RHEA:12973"/>
        <dbReference type="ChEBI" id="CHEBI:30616"/>
        <dbReference type="ChEBI" id="CHEBI:456215"/>
        <dbReference type="ChEBI" id="CHEBI:456216"/>
        <dbReference type="EC" id="2.7.4.3"/>
    </reaction>
</comment>
<comment type="pathway">
    <text evidence="1">Purine metabolism; AMP biosynthesis via salvage pathway; AMP from ADP: step 1/1.</text>
</comment>
<comment type="subunit">
    <text evidence="1">Monomer.</text>
</comment>
<comment type="subcellular location">
    <subcellularLocation>
        <location evidence="1">Cytoplasm</location>
    </subcellularLocation>
</comment>
<comment type="domain">
    <text evidence="1">Consists of three domains, a large central CORE domain and two small peripheral domains, NMPbind and LID, which undergo movements during catalysis. The LID domain closes over the site of phosphoryl transfer upon ATP binding. Assembling and dissambling the active center during each catalytic cycle provides an effective means to prevent ATP hydrolysis.</text>
</comment>
<comment type="similarity">
    <text evidence="1">Belongs to the adenylate kinase family.</text>
</comment>
<protein>
    <recommendedName>
        <fullName evidence="1">Adenylate kinase</fullName>
        <shortName evidence="1">AK</shortName>
        <ecNumber evidence="1">2.7.4.3</ecNumber>
    </recommendedName>
    <alternativeName>
        <fullName evidence="1">ATP-AMP transphosphorylase</fullName>
    </alternativeName>
    <alternativeName>
        <fullName evidence="1">ATP:AMP phosphotransferase</fullName>
    </alternativeName>
    <alternativeName>
        <fullName evidence="1">Adenylate monophosphate kinase</fullName>
    </alternativeName>
</protein>